<organism>
    <name type="scientific">Rattus norvegicus</name>
    <name type="common">Rat</name>
    <dbReference type="NCBI Taxonomy" id="10116"/>
    <lineage>
        <taxon>Eukaryota</taxon>
        <taxon>Metazoa</taxon>
        <taxon>Chordata</taxon>
        <taxon>Craniata</taxon>
        <taxon>Vertebrata</taxon>
        <taxon>Euteleostomi</taxon>
        <taxon>Mammalia</taxon>
        <taxon>Eutheria</taxon>
        <taxon>Euarchontoglires</taxon>
        <taxon>Glires</taxon>
        <taxon>Rodentia</taxon>
        <taxon>Myomorpha</taxon>
        <taxon>Muroidea</taxon>
        <taxon>Muridae</taxon>
        <taxon>Murinae</taxon>
        <taxon>Rattus</taxon>
    </lineage>
</organism>
<dbReference type="EC" id="2.3.2.27"/>
<dbReference type="EMBL" id="BC079288">
    <property type="protein sequence ID" value="AAH79288.1"/>
    <property type="molecule type" value="mRNA"/>
</dbReference>
<dbReference type="RefSeq" id="NP_001012211.1">
    <property type="nucleotide sequence ID" value="NM_001012211.1"/>
</dbReference>
<dbReference type="SMR" id="Q6AXW4"/>
<dbReference type="FunCoup" id="Q6AXW4">
    <property type="interactions" value="400"/>
</dbReference>
<dbReference type="STRING" id="10116.ENSRNOP00000040832"/>
<dbReference type="PhosphoSitePlus" id="Q6AXW4"/>
<dbReference type="PaxDb" id="10116-ENSRNOP00000040832"/>
<dbReference type="GeneID" id="364510"/>
<dbReference type="KEGG" id="rno:364510"/>
<dbReference type="UCSC" id="RGD:1308638">
    <property type="organism name" value="rat"/>
</dbReference>
<dbReference type="AGR" id="RGD:1308638"/>
<dbReference type="CTD" id="51533"/>
<dbReference type="RGD" id="1308638">
    <property type="gene designation" value="Phf7"/>
</dbReference>
<dbReference type="VEuPathDB" id="HostDB:ENSRNOG00000018996"/>
<dbReference type="eggNOG" id="KOG1084">
    <property type="taxonomic scope" value="Eukaryota"/>
</dbReference>
<dbReference type="HOGENOM" id="CLU_055746_0_1_1"/>
<dbReference type="InParanoid" id="Q6AXW4"/>
<dbReference type="OrthoDB" id="512616at2759"/>
<dbReference type="PhylomeDB" id="Q6AXW4"/>
<dbReference type="TreeFam" id="TF325426"/>
<dbReference type="UniPathway" id="UPA00143"/>
<dbReference type="PRO" id="PR:Q6AXW4"/>
<dbReference type="Proteomes" id="UP000002494">
    <property type="component" value="Chromosome 16"/>
</dbReference>
<dbReference type="Bgee" id="ENSRNOG00000018996">
    <property type="expression patterns" value="Expressed in testis and 19 other cell types or tissues"/>
</dbReference>
<dbReference type="GO" id="GO:0005829">
    <property type="term" value="C:cytosol"/>
    <property type="evidence" value="ECO:0007669"/>
    <property type="project" value="Ensembl"/>
</dbReference>
<dbReference type="GO" id="GO:0005794">
    <property type="term" value="C:Golgi apparatus"/>
    <property type="evidence" value="ECO:0007669"/>
    <property type="project" value="Ensembl"/>
</dbReference>
<dbReference type="GO" id="GO:0016607">
    <property type="term" value="C:nuclear speck"/>
    <property type="evidence" value="ECO:0007669"/>
    <property type="project" value="Ensembl"/>
</dbReference>
<dbReference type="GO" id="GO:0005634">
    <property type="term" value="C:nucleus"/>
    <property type="evidence" value="ECO:0000318"/>
    <property type="project" value="GO_Central"/>
</dbReference>
<dbReference type="GO" id="GO:0005886">
    <property type="term" value="C:plasma membrane"/>
    <property type="evidence" value="ECO:0007669"/>
    <property type="project" value="Ensembl"/>
</dbReference>
<dbReference type="GO" id="GO:0008270">
    <property type="term" value="F:zinc ion binding"/>
    <property type="evidence" value="ECO:0007669"/>
    <property type="project" value="UniProtKB-KW"/>
</dbReference>
<dbReference type="GO" id="GO:0090291">
    <property type="term" value="P:negative regulation of osteoclast proliferation"/>
    <property type="evidence" value="ECO:0000250"/>
    <property type="project" value="UniProtKB"/>
</dbReference>
<dbReference type="CDD" id="cd15669">
    <property type="entry name" value="ePHD_PHF7_G2E3_like"/>
    <property type="match status" value="1"/>
</dbReference>
<dbReference type="CDD" id="cd15496">
    <property type="entry name" value="PHD_PHF7_G2E3_like"/>
    <property type="match status" value="1"/>
</dbReference>
<dbReference type="FunFam" id="3.30.40.10:FF:000132">
    <property type="entry name" value="G2/M phase-specific E3 ubiquitin-protein ligase"/>
    <property type="match status" value="1"/>
</dbReference>
<dbReference type="FunFam" id="3.30.40.10:FF:000443">
    <property type="entry name" value="PHD finger protein 7 isoform 1"/>
    <property type="match status" value="1"/>
</dbReference>
<dbReference type="Gene3D" id="3.30.40.10">
    <property type="entry name" value="Zinc/RING finger domain, C3HC4 (zinc finger)"/>
    <property type="match status" value="2"/>
</dbReference>
<dbReference type="InterPro" id="IPR034732">
    <property type="entry name" value="EPHD"/>
</dbReference>
<dbReference type="InterPro" id="IPR051188">
    <property type="entry name" value="PHD-type_Zinc_Finger"/>
</dbReference>
<dbReference type="InterPro" id="IPR042013">
    <property type="entry name" value="PHF7/G2E3_ePHD"/>
</dbReference>
<dbReference type="InterPro" id="IPR042012">
    <property type="entry name" value="PHF7/G2E3_PHD"/>
</dbReference>
<dbReference type="InterPro" id="IPR011011">
    <property type="entry name" value="Znf_FYVE_PHD"/>
</dbReference>
<dbReference type="InterPro" id="IPR001965">
    <property type="entry name" value="Znf_PHD"/>
</dbReference>
<dbReference type="InterPro" id="IPR001841">
    <property type="entry name" value="Znf_RING"/>
</dbReference>
<dbReference type="InterPro" id="IPR013083">
    <property type="entry name" value="Znf_RING/FYVE/PHD"/>
</dbReference>
<dbReference type="PANTHER" id="PTHR12420">
    <property type="entry name" value="PHD FINGER PROTEIN"/>
    <property type="match status" value="1"/>
</dbReference>
<dbReference type="PANTHER" id="PTHR12420:SF47">
    <property type="entry name" value="PHD FINGER PROTEIN 7"/>
    <property type="match status" value="1"/>
</dbReference>
<dbReference type="Pfam" id="PF13771">
    <property type="entry name" value="zf-HC5HC2H"/>
    <property type="match status" value="1"/>
</dbReference>
<dbReference type="SMART" id="SM00249">
    <property type="entry name" value="PHD"/>
    <property type="match status" value="2"/>
</dbReference>
<dbReference type="SUPFAM" id="SSF57903">
    <property type="entry name" value="FYVE/PHD zinc finger"/>
    <property type="match status" value="1"/>
</dbReference>
<dbReference type="PROSITE" id="PS51805">
    <property type="entry name" value="EPHD"/>
    <property type="match status" value="1"/>
</dbReference>
<dbReference type="PROSITE" id="PS50089">
    <property type="entry name" value="ZF_RING_2"/>
    <property type="match status" value="1"/>
</dbReference>
<reference key="1">
    <citation type="journal article" date="2004" name="Genome Res.">
        <title>The status, quality, and expansion of the NIH full-length cDNA project: the Mammalian Gene Collection (MGC).</title>
        <authorList>
            <consortium name="The MGC Project Team"/>
        </authorList>
    </citation>
    <scope>NUCLEOTIDE SEQUENCE [LARGE SCALE MRNA]</scope>
    <source>
        <tissue>Testis</tissue>
    </source>
</reference>
<gene>
    <name evidence="7" type="primary">PHD finger protein 7</name>
</gene>
<gene>
    <name evidence="7" type="primary">Phf7</name>
</gene>
<sequence length="380" mass="43388">MRTIKEKKEHPRLRKTARTKKVTHRKLSSGPVCLLCFQEPGDPEKLGEFLQKDNLCVHYFCLILSSKLPQKGQPNRGLHGFMPEDIKKEAARASRKVCFVCKRKGAAIRCQKDQCVQNFHLPCGQERGCLSQFFGEYKSYCGKHRPTQNIHQRSFGESCVLCCEDLSRASVENIRSPCCSQAIYHRKCIQKYAHTSAKHFFKCPQCNNREEFPQEMLRMGIHIPDRDAAWELEPGAFSELYQRYQHCDAPICLYEQGRDSFEDEGRWRLILCATCGSHGTHRDCSSLRPNSKKWECNECLPASTEDSVSENLGDTPCCSSTFCPHEPFLRATSLEENPGSSWTNWLQPSLLEKPESSSGSSCQSWRSKGIKVTKDCKKSK</sequence>
<accession>Q6AXW4</accession>
<evidence type="ECO:0000250" key="1">
    <source>
        <dbReference type="UniProtKB" id="Q9BWX1"/>
    </source>
</evidence>
<evidence type="ECO:0000250" key="2">
    <source>
        <dbReference type="UniProtKB" id="Q9DAG9"/>
    </source>
</evidence>
<evidence type="ECO:0000255" key="3">
    <source>
        <dbReference type="PROSITE-ProRule" id="PRU00175"/>
    </source>
</evidence>
<evidence type="ECO:0000255" key="4">
    <source>
        <dbReference type="PROSITE-ProRule" id="PRU01146"/>
    </source>
</evidence>
<evidence type="ECO:0000256" key="5">
    <source>
        <dbReference type="SAM" id="MobiDB-lite"/>
    </source>
</evidence>
<evidence type="ECO:0000305" key="6"/>
<evidence type="ECO:0000312" key="7">
    <source>
        <dbReference type="RGD" id="1308638"/>
    </source>
</evidence>
<comment type="function">
    <text evidence="1 2">E3 ubiquitin-protein ligase which ubiquitinates histone H3 at 'Lys-14' (By similarity). Required for male fertility, via inhibition of SPOP-mediated BRDT degradation when in the presence of acetylated histone H4 in early condensing spermatids (By similarity). Stabilization of BRDT allows it to facilitate histone removal in early condensing spermatids and promote the progression of histone-to-protamine exchange (By similarity). Promotes the expression of steroidogenesis proteins in the testes, and as a result plays a role in maintaining testosterone levels and repressing osteoclastogenesis (By similarity). Promotes transcription of cardiac enhancer genes by facilitating binding of cardiac transcription factors such as MEF2C and GATA4 to target gene promoters (By similarity). Ubiquitinates histone H4 (By similarity). Ubiquitinates histone H2A and H3 as part of the nucleosome core particle (By similarity).</text>
</comment>
<comment type="catalytic activity">
    <reaction evidence="2">
        <text>S-ubiquitinyl-[E2 ubiquitin-conjugating enzyme]-L-cysteine + [acceptor protein]-L-lysine = [E2 ubiquitin-conjugating enzyme]-L-cysteine + N(6)-ubiquitinyl-[acceptor protein]-L-lysine.</text>
        <dbReference type="EC" id="2.3.2.27"/>
    </reaction>
</comment>
<comment type="pathway">
    <text evidence="2">Protein modification; protein ubiquitination.</text>
</comment>
<comment type="subunit">
    <text evidence="2">Interacts with MEF2C; the interaction promotes MEF2C binding to its transcription targets (By similarity). Interacts with GATA4; the interaction promotes GATA4 binding to its transcription targets (By similarity). Interacts with UBE2D2; the interaction inhibits cleavage of PHF7 and promotes association of the complex with the nucleosome core particle (By similarity).</text>
</comment>
<comment type="subcellular location">
    <subcellularLocation>
        <location evidence="1">Nucleus</location>
    </subcellularLocation>
</comment>
<comment type="domain">
    <text evidence="2">The extended PHD (ePHD) domain is required for interaction with the nucleosome core particle via binding to DNA.</text>
</comment>
<comment type="domain">
    <text evidence="2">The C-terminal PHD domain is required for histone H3 substrate binding.</text>
</comment>
<comment type="domain">
    <text evidence="2">The RING, Linker and PHD domains act as a combined interaction interface for UBE2D2.</text>
</comment>
<name>PHF7_RAT</name>
<proteinExistence type="evidence at transcript level"/>
<protein>
    <recommendedName>
        <fullName evidence="6">E3 ubiquitin-protein ligase PHF7</fullName>
        <ecNumber>2.3.2.27</ecNumber>
    </recommendedName>
</protein>
<keyword id="KW-0479">Metal-binding</keyword>
<keyword id="KW-0539">Nucleus</keyword>
<keyword id="KW-1185">Reference proteome</keyword>
<keyword id="KW-0808">Transferase</keyword>
<keyword id="KW-0833">Ubl conjugation pathway</keyword>
<keyword id="KW-0862">Zinc</keyword>
<keyword id="KW-0863">Zinc-finger</keyword>
<feature type="chain" id="PRO_0000055998" description="E3 ubiquitin-protein ligase PHF7">
    <location>
        <begin position="1"/>
        <end position="380"/>
    </location>
</feature>
<feature type="zinc finger region" description="C2HC pre-PHD-type" evidence="4">
    <location>
        <begin position="30"/>
        <end position="68"/>
    </location>
</feature>
<feature type="zinc finger region" description="PHD-type" evidence="4">
    <location>
        <begin position="96"/>
        <end position="145"/>
    </location>
</feature>
<feature type="zinc finger region" description="RING-type; degenerate" evidence="3">
    <location>
        <begin position="159"/>
        <end position="207"/>
    </location>
</feature>
<feature type="region of interest" description="Disordered" evidence="5">
    <location>
        <begin position="1"/>
        <end position="23"/>
    </location>
</feature>
<feature type="region of interest" description="Required for interaction and ubiquitination of the nucleosome core particle" evidence="2">
    <location>
        <begin position="67"/>
        <end position="92"/>
    </location>
</feature>
<feature type="region of interest" description="Required for interaction with ubiquitinated UBE2D2" evidence="2">
    <location>
        <begin position="150"/>
        <end position="306"/>
    </location>
</feature>
<feature type="region of interest" description="Required for association with and ubiquitination of H3" evidence="2">
    <location>
        <begin position="243"/>
        <end position="300"/>
    </location>
</feature>
<feature type="region of interest" description="Disordered" evidence="5">
    <location>
        <begin position="352"/>
        <end position="380"/>
    </location>
</feature>
<feature type="compositionally biased region" description="Basic residues" evidence="5">
    <location>
        <begin position="10"/>
        <end position="23"/>
    </location>
</feature>
<feature type="compositionally biased region" description="Low complexity" evidence="5">
    <location>
        <begin position="352"/>
        <end position="367"/>
    </location>
</feature>
<feature type="binding site" evidence="2">
    <location>
        <position position="33"/>
    </location>
    <ligand>
        <name>Zn(2+)</name>
        <dbReference type="ChEBI" id="CHEBI:29105"/>
        <label>1</label>
    </ligand>
</feature>
<feature type="binding site" evidence="2">
    <location>
        <position position="36"/>
    </location>
    <ligand>
        <name>Zn(2+)</name>
        <dbReference type="ChEBI" id="CHEBI:29105"/>
        <label>1</label>
    </ligand>
</feature>
<feature type="binding site" evidence="2">
    <location>
        <position position="58"/>
    </location>
    <ligand>
        <name>Zn(2+)</name>
        <dbReference type="ChEBI" id="CHEBI:29105"/>
        <label>1</label>
    </ligand>
</feature>
<feature type="binding site" evidence="2">
    <location>
        <position position="61"/>
    </location>
    <ligand>
        <name>Zn(2+)</name>
        <dbReference type="ChEBI" id="CHEBI:29105"/>
        <label>1</label>
    </ligand>
</feature>
<feature type="binding site" evidence="2">
    <location>
        <position position="98"/>
    </location>
    <ligand>
        <name>Zn(2+)</name>
        <dbReference type="ChEBI" id="CHEBI:29105"/>
        <label>2</label>
    </ligand>
</feature>
<feature type="binding site" evidence="2">
    <location>
        <position position="101"/>
    </location>
    <ligand>
        <name>Zn(2+)</name>
        <dbReference type="ChEBI" id="CHEBI:29105"/>
        <label>2</label>
    </ligand>
</feature>
<feature type="binding site" evidence="2">
    <location>
        <position position="110"/>
    </location>
    <ligand>
        <name>Zn(2+)</name>
        <dbReference type="ChEBI" id="CHEBI:29105"/>
        <label>3</label>
    </ligand>
</feature>
<feature type="binding site" evidence="2">
    <location>
        <position position="115"/>
    </location>
    <ligand>
        <name>Zn(2+)</name>
        <dbReference type="ChEBI" id="CHEBI:29105"/>
        <label>3</label>
    </ligand>
</feature>
<feature type="binding site" evidence="2">
    <location>
        <position position="120"/>
    </location>
    <ligand>
        <name>Zn(2+)</name>
        <dbReference type="ChEBI" id="CHEBI:29105"/>
        <label>2</label>
    </ligand>
</feature>
<feature type="binding site" evidence="2">
    <location>
        <position position="123"/>
    </location>
    <ligand>
        <name>Zn(2+)</name>
        <dbReference type="ChEBI" id="CHEBI:29105"/>
        <label>2</label>
    </ligand>
</feature>
<feature type="binding site" evidence="2">
    <location>
        <position position="141"/>
    </location>
    <ligand>
        <name>Zn(2+)</name>
        <dbReference type="ChEBI" id="CHEBI:29105"/>
        <label>3</label>
    </ligand>
</feature>
<feature type="binding site" evidence="2">
    <location>
        <position position="144"/>
    </location>
    <ligand>
        <name>Zn(2+)</name>
        <dbReference type="ChEBI" id="CHEBI:29105"/>
        <label>3</label>
    </ligand>
</feature>
<feature type="binding site" evidence="2">
    <location>
        <position position="159"/>
    </location>
    <ligand>
        <name>Zn(2+)</name>
        <dbReference type="ChEBI" id="CHEBI:29105"/>
        <label>4</label>
    </ligand>
</feature>
<feature type="binding site" evidence="2">
    <location>
        <position position="162"/>
    </location>
    <ligand>
        <name>Zn(2+)</name>
        <dbReference type="ChEBI" id="CHEBI:29105"/>
        <label>4</label>
    </ligand>
</feature>
<feature type="binding site" evidence="2">
    <location>
        <position position="178"/>
    </location>
    <ligand>
        <name>Zn(2+)</name>
        <dbReference type="ChEBI" id="CHEBI:29105"/>
        <label>5</label>
    </ligand>
</feature>
<feature type="binding site" evidence="2">
    <location>
        <position position="179"/>
    </location>
    <ligand>
        <name>Zn(2+)</name>
        <dbReference type="ChEBI" id="CHEBI:29105"/>
        <label>5</label>
    </ligand>
</feature>
<feature type="binding site" evidence="2">
    <location>
        <position position="185"/>
    </location>
    <ligand>
        <name>Zn(2+)</name>
        <dbReference type="ChEBI" id="CHEBI:29105"/>
        <label>4</label>
    </ligand>
</feature>
<feature type="binding site" evidence="2">
    <location>
        <position position="188"/>
    </location>
    <ligand>
        <name>Zn(2+)</name>
        <dbReference type="ChEBI" id="CHEBI:29105"/>
        <label>4</label>
    </ligand>
</feature>
<feature type="binding site" evidence="2">
    <location>
        <position position="203"/>
    </location>
    <ligand>
        <name>Zn(2+)</name>
        <dbReference type="ChEBI" id="CHEBI:29105"/>
        <label>5</label>
    </ligand>
</feature>
<feature type="binding site" evidence="2">
    <location>
        <position position="206"/>
    </location>
    <ligand>
        <name>Zn(2+)</name>
        <dbReference type="ChEBI" id="CHEBI:29105"/>
        <label>5</label>
    </ligand>
</feature>
<feature type="binding site" evidence="2">
    <location>
        <position position="247"/>
    </location>
    <ligand>
        <name>Zn(2+)</name>
        <dbReference type="ChEBI" id="CHEBI:29105"/>
        <label>6</label>
    </ligand>
</feature>
<feature type="binding site" evidence="2">
    <location>
        <position position="252"/>
    </location>
    <ligand>
        <name>Zn(2+)</name>
        <dbReference type="ChEBI" id="CHEBI:29105"/>
        <label>6</label>
    </ligand>
</feature>
<feature type="binding site" evidence="2">
    <location>
        <position position="272"/>
    </location>
    <ligand>
        <name>Zn(2+)</name>
        <dbReference type="ChEBI" id="CHEBI:29105"/>
        <label>7</label>
    </ligand>
</feature>
<feature type="binding site" evidence="2">
    <location>
        <position position="275"/>
    </location>
    <ligand>
        <name>Zn(2+)</name>
        <dbReference type="ChEBI" id="CHEBI:29105"/>
        <label>7</label>
    </ligand>
</feature>
<feature type="binding site" evidence="2">
    <location>
        <position position="281"/>
    </location>
    <ligand>
        <name>Zn(2+)</name>
        <dbReference type="ChEBI" id="CHEBI:29105"/>
        <label>6</label>
    </ligand>
</feature>
<feature type="binding site" evidence="2">
    <location>
        <position position="284"/>
    </location>
    <ligand>
        <name>Zn(2+)</name>
        <dbReference type="ChEBI" id="CHEBI:29105"/>
        <label>6</label>
    </ligand>
</feature>
<feature type="binding site" evidence="2">
    <location>
        <position position="296"/>
    </location>
    <ligand>
        <name>Zn(2+)</name>
        <dbReference type="ChEBI" id="CHEBI:29105"/>
        <label>7</label>
    </ligand>
</feature>
<feature type="binding site" evidence="2">
    <location>
        <position position="299"/>
    </location>
    <ligand>
        <name>Zn(2+)</name>
        <dbReference type="ChEBI" id="CHEBI:29105"/>
        <label>7</label>
    </ligand>
</feature>
<feature type="site" description="Cleavage" evidence="2">
    <location>
        <begin position="149"/>
        <end position="150"/>
    </location>
</feature>